<accession>Q12223</accession>
<accession>D6VRT7</accession>
<keyword id="KW-0227">DNA damage</keyword>
<keyword id="KW-0233">DNA recombination</keyword>
<keyword id="KW-0234">DNA repair</keyword>
<keyword id="KW-0539">Nucleus</keyword>
<keyword id="KW-1185">Reference proteome</keyword>
<gene>
    <name type="primary">RAD59</name>
    <name type="ordered locus">YDL059C</name>
</gene>
<name>RAD59_YEAST</name>
<reference key="1">
    <citation type="journal article" date="1996" name="Genes Dev.">
        <title>A Rad52 homolog is required for RAD51-independent mitotic recombination in Saccharomyces cerevisiae.</title>
        <authorList>
            <person name="Bai Y."/>
            <person name="Symington L.S."/>
        </authorList>
    </citation>
    <scope>NUCLEOTIDE SEQUENCE [GENOMIC DNA]</scope>
</reference>
<reference key="2">
    <citation type="journal article" date="1997" name="Nature">
        <title>The nucleotide sequence of Saccharomyces cerevisiae chromosome IV.</title>
        <authorList>
            <person name="Jacq C."/>
            <person name="Alt-Moerbe J."/>
            <person name="Andre B."/>
            <person name="Arnold W."/>
            <person name="Bahr A."/>
            <person name="Ballesta J.P.G."/>
            <person name="Bargues M."/>
            <person name="Baron L."/>
            <person name="Becker A."/>
            <person name="Biteau N."/>
            <person name="Bloecker H."/>
            <person name="Blugeon C."/>
            <person name="Boskovic J."/>
            <person name="Brandt P."/>
            <person name="Brueckner M."/>
            <person name="Buitrago M.J."/>
            <person name="Coster F."/>
            <person name="Delaveau T."/>
            <person name="del Rey F."/>
            <person name="Dujon B."/>
            <person name="Eide L.G."/>
            <person name="Garcia-Cantalejo J.M."/>
            <person name="Goffeau A."/>
            <person name="Gomez-Peris A."/>
            <person name="Granotier C."/>
            <person name="Hanemann V."/>
            <person name="Hankeln T."/>
            <person name="Hoheisel J.D."/>
            <person name="Jaeger W."/>
            <person name="Jimenez A."/>
            <person name="Jonniaux J.-L."/>
            <person name="Kraemer C."/>
            <person name="Kuester H."/>
            <person name="Laamanen P."/>
            <person name="Legros Y."/>
            <person name="Louis E.J."/>
            <person name="Moeller-Rieker S."/>
            <person name="Monnet A."/>
            <person name="Moro M."/>
            <person name="Mueller-Auer S."/>
            <person name="Nussbaumer B."/>
            <person name="Paricio N."/>
            <person name="Paulin L."/>
            <person name="Perea J."/>
            <person name="Perez-Alonso M."/>
            <person name="Perez-Ortin J.E."/>
            <person name="Pohl T.M."/>
            <person name="Prydz H."/>
            <person name="Purnelle B."/>
            <person name="Rasmussen S.W."/>
            <person name="Remacha M.A."/>
            <person name="Revuelta J.L."/>
            <person name="Rieger M."/>
            <person name="Salom D."/>
            <person name="Saluz H.P."/>
            <person name="Saiz J.E."/>
            <person name="Saren A.-M."/>
            <person name="Schaefer M."/>
            <person name="Scharfe M."/>
            <person name="Schmidt E.R."/>
            <person name="Schneider C."/>
            <person name="Scholler P."/>
            <person name="Schwarz S."/>
            <person name="Soler-Mira A."/>
            <person name="Urrestarazu L.A."/>
            <person name="Verhasselt P."/>
            <person name="Vissers S."/>
            <person name="Voet M."/>
            <person name="Volckaert G."/>
            <person name="Wagner G."/>
            <person name="Wambutt R."/>
            <person name="Wedler E."/>
            <person name="Wedler H."/>
            <person name="Woelfl S."/>
            <person name="Harris D.E."/>
            <person name="Bowman S."/>
            <person name="Brown D."/>
            <person name="Churcher C.M."/>
            <person name="Connor R."/>
            <person name="Dedman K."/>
            <person name="Gentles S."/>
            <person name="Hamlin N."/>
            <person name="Hunt S."/>
            <person name="Jones L."/>
            <person name="McDonald S."/>
            <person name="Murphy L.D."/>
            <person name="Niblett D."/>
            <person name="Odell C."/>
            <person name="Oliver K."/>
            <person name="Rajandream M.A."/>
            <person name="Richards C."/>
            <person name="Shore L."/>
            <person name="Walsh S.V."/>
            <person name="Barrell B.G."/>
            <person name="Dietrich F.S."/>
            <person name="Mulligan J.T."/>
            <person name="Allen E."/>
            <person name="Araujo R."/>
            <person name="Aviles E."/>
            <person name="Berno A."/>
            <person name="Carpenter J."/>
            <person name="Chen E."/>
            <person name="Cherry J.M."/>
            <person name="Chung E."/>
            <person name="Duncan M."/>
            <person name="Hunicke-Smith S."/>
            <person name="Hyman R.W."/>
            <person name="Komp C."/>
            <person name="Lashkari D."/>
            <person name="Lew H."/>
            <person name="Lin D."/>
            <person name="Mosedale D."/>
            <person name="Nakahara K."/>
            <person name="Namath A."/>
            <person name="Oefner P."/>
            <person name="Oh C."/>
            <person name="Petel F.X."/>
            <person name="Roberts D."/>
            <person name="Schramm S."/>
            <person name="Schroeder M."/>
            <person name="Shogren T."/>
            <person name="Shroff N."/>
            <person name="Winant A."/>
            <person name="Yelton M.A."/>
            <person name="Botstein D."/>
            <person name="Davis R.W."/>
            <person name="Johnston M."/>
            <person name="Andrews S."/>
            <person name="Brinkman R."/>
            <person name="Cooper J."/>
            <person name="Ding H."/>
            <person name="Du Z."/>
            <person name="Favello A."/>
            <person name="Fulton L."/>
            <person name="Gattung S."/>
            <person name="Greco T."/>
            <person name="Hallsworth K."/>
            <person name="Hawkins J."/>
            <person name="Hillier L.W."/>
            <person name="Jier M."/>
            <person name="Johnson D."/>
            <person name="Johnston L."/>
            <person name="Kirsten J."/>
            <person name="Kucaba T."/>
            <person name="Langston Y."/>
            <person name="Latreille P."/>
            <person name="Le T."/>
            <person name="Mardis E."/>
            <person name="Menezes S."/>
            <person name="Miller N."/>
            <person name="Nhan M."/>
            <person name="Pauley A."/>
            <person name="Peluso D."/>
            <person name="Rifkin L."/>
            <person name="Riles L."/>
            <person name="Taich A."/>
            <person name="Trevaskis E."/>
            <person name="Vignati D."/>
            <person name="Wilcox L."/>
            <person name="Wohldman P."/>
            <person name="Vaudin M."/>
            <person name="Wilson R."/>
            <person name="Waterston R."/>
            <person name="Albermann K."/>
            <person name="Hani J."/>
            <person name="Heumann K."/>
            <person name="Kleine K."/>
            <person name="Mewes H.-W."/>
            <person name="Zollner A."/>
            <person name="Zaccaria P."/>
        </authorList>
    </citation>
    <scope>NUCLEOTIDE SEQUENCE [LARGE SCALE GENOMIC DNA]</scope>
    <source>
        <strain>ATCC 204508 / S288c</strain>
    </source>
</reference>
<reference key="3">
    <citation type="journal article" date="2014" name="G3 (Bethesda)">
        <title>The reference genome sequence of Saccharomyces cerevisiae: Then and now.</title>
        <authorList>
            <person name="Engel S.R."/>
            <person name="Dietrich F.S."/>
            <person name="Fisk D.G."/>
            <person name="Binkley G."/>
            <person name="Balakrishnan R."/>
            <person name="Costanzo M.C."/>
            <person name="Dwight S.S."/>
            <person name="Hitz B.C."/>
            <person name="Karra K."/>
            <person name="Nash R.S."/>
            <person name="Weng S."/>
            <person name="Wong E.D."/>
            <person name="Lloyd P."/>
            <person name="Skrzypek M.S."/>
            <person name="Miyasato S.R."/>
            <person name="Simison M."/>
            <person name="Cherry J.M."/>
        </authorList>
    </citation>
    <scope>GENOME REANNOTATION</scope>
    <source>
        <strain>ATCC 204508 / S288c</strain>
    </source>
</reference>
<reference key="4">
    <citation type="journal article" date="2007" name="Genome Res.">
        <title>Approaching a complete repository of sequence-verified protein-encoding clones for Saccharomyces cerevisiae.</title>
        <authorList>
            <person name="Hu Y."/>
            <person name="Rolfs A."/>
            <person name="Bhullar B."/>
            <person name="Murthy T.V.S."/>
            <person name="Zhu C."/>
            <person name="Berger M.F."/>
            <person name="Camargo A.A."/>
            <person name="Kelley F."/>
            <person name="McCarron S."/>
            <person name="Jepson D."/>
            <person name="Richardson A."/>
            <person name="Raphael J."/>
            <person name="Moreira D."/>
            <person name="Taycher E."/>
            <person name="Zuo D."/>
            <person name="Mohr S."/>
            <person name="Kane M.F."/>
            <person name="Williamson J."/>
            <person name="Simpson A.J.G."/>
            <person name="Bulyk M.L."/>
            <person name="Harlow E."/>
            <person name="Marsischky G."/>
            <person name="Kolodner R.D."/>
            <person name="LaBaer J."/>
        </authorList>
    </citation>
    <scope>NUCLEOTIDE SEQUENCE [GENOMIC DNA]</scope>
</reference>
<reference key="5">
    <citation type="journal article" date="2003" name="DNA Repair">
        <title>The Rad52-Rad59 complex interacts with Rad51 and replication protein A.</title>
        <authorList>
            <person name="Davis A.P."/>
            <person name="Symington L.S."/>
        </authorList>
    </citation>
    <scope>INTERACTION WITH RAD51 AND RAD52</scope>
</reference>
<reference key="6">
    <citation type="journal article" date="2003" name="Nature">
        <title>Global analysis of protein expression in yeast.</title>
        <authorList>
            <person name="Ghaemmaghami S."/>
            <person name="Huh W.-K."/>
            <person name="Bower K."/>
            <person name="Howson R.W."/>
            <person name="Belle A."/>
            <person name="Dephoure N."/>
            <person name="O'Shea E.K."/>
            <person name="Weissman J.S."/>
        </authorList>
    </citation>
    <scope>LEVEL OF PROTEIN EXPRESSION [LARGE SCALE ANALYSIS]</scope>
</reference>
<protein>
    <recommendedName>
        <fullName>DNA repair protein RAD59</fullName>
    </recommendedName>
</protein>
<sequence>MTIQAKPSSSISYDSTTYGTAPGLDIKEFQIIEDWNGRPASAWSVQRIGLLQSKIERYTYNIYHNNKYGKHNLSKLIPGHALIQFANETFGYDGWRMDVIDVEARECQPFTAVNNGENTNTSEVKYTVVAEAQVKVTLKDGTNTQCGGLGRITLSSRGECYNRSKKEAVGDALKKALLSFEKIILDYETKITNNYYVDGLYGSKKIKNEANTNYNLLSATNSKPTFIKLEDAKGTHIK</sequence>
<dbReference type="EMBL" id="U53668">
    <property type="protein sequence ID" value="AAB66660.1"/>
    <property type="molecule type" value="Genomic_DNA"/>
</dbReference>
<dbReference type="EMBL" id="Z74107">
    <property type="protein sequence ID" value="CAA98622.1"/>
    <property type="molecule type" value="Genomic_DNA"/>
</dbReference>
<dbReference type="EMBL" id="AY693025">
    <property type="protein sequence ID" value="AAT93044.1"/>
    <property type="molecule type" value="Genomic_DNA"/>
</dbReference>
<dbReference type="EMBL" id="BK006938">
    <property type="protein sequence ID" value="DAA11797.1"/>
    <property type="molecule type" value="Genomic_DNA"/>
</dbReference>
<dbReference type="PIR" id="S67594">
    <property type="entry name" value="S67594"/>
</dbReference>
<dbReference type="RefSeq" id="NP_010224.1">
    <property type="nucleotide sequence ID" value="NM_001180118.1"/>
</dbReference>
<dbReference type="SMR" id="Q12223"/>
<dbReference type="BioGRID" id="31999">
    <property type="interactions" value="152"/>
</dbReference>
<dbReference type="DIP" id="DIP-2068N"/>
<dbReference type="FunCoup" id="Q12223">
    <property type="interactions" value="156"/>
</dbReference>
<dbReference type="IntAct" id="Q12223">
    <property type="interactions" value="68"/>
</dbReference>
<dbReference type="MINT" id="Q12223"/>
<dbReference type="STRING" id="4932.YDL059C"/>
<dbReference type="iPTMnet" id="Q12223"/>
<dbReference type="PaxDb" id="4932-YDL059C"/>
<dbReference type="PeptideAtlas" id="Q12223"/>
<dbReference type="TopDownProteomics" id="Q12223"/>
<dbReference type="EnsemblFungi" id="YDL059C_mRNA">
    <property type="protein sequence ID" value="YDL059C"/>
    <property type="gene ID" value="YDL059C"/>
</dbReference>
<dbReference type="GeneID" id="851500"/>
<dbReference type="KEGG" id="sce:YDL059C"/>
<dbReference type="AGR" id="SGD:S000002217"/>
<dbReference type="SGD" id="S000002217">
    <property type="gene designation" value="RAD59"/>
</dbReference>
<dbReference type="VEuPathDB" id="FungiDB:YDL059C"/>
<dbReference type="eggNOG" id="KOG4141">
    <property type="taxonomic scope" value="Eukaryota"/>
</dbReference>
<dbReference type="GeneTree" id="ENSGT00390000008766"/>
<dbReference type="HOGENOM" id="CLU_091426_0_0_1"/>
<dbReference type="InParanoid" id="Q12223"/>
<dbReference type="OMA" id="WSVQRIG"/>
<dbReference type="OrthoDB" id="206565at2759"/>
<dbReference type="BioCyc" id="YEAST:G3O-29475-MONOMER"/>
<dbReference type="BioGRID-ORCS" id="851500">
    <property type="hits" value="0 hits in 10 CRISPR screens"/>
</dbReference>
<dbReference type="PRO" id="PR:Q12223"/>
<dbReference type="Proteomes" id="UP000002311">
    <property type="component" value="Chromosome IV"/>
</dbReference>
<dbReference type="RNAct" id="Q12223">
    <property type="molecule type" value="protein"/>
</dbReference>
<dbReference type="GO" id="GO:0005737">
    <property type="term" value="C:cytoplasm"/>
    <property type="evidence" value="ECO:0007005"/>
    <property type="project" value="SGD"/>
</dbReference>
<dbReference type="GO" id="GO:0005759">
    <property type="term" value="C:mitochondrial matrix"/>
    <property type="evidence" value="ECO:0000314"/>
    <property type="project" value="SGD"/>
</dbReference>
<dbReference type="GO" id="GO:0005634">
    <property type="term" value="C:nucleus"/>
    <property type="evidence" value="ECO:0000316"/>
    <property type="project" value="SGD"/>
</dbReference>
<dbReference type="GO" id="GO:0006277">
    <property type="term" value="P:DNA amplification"/>
    <property type="evidence" value="ECO:0000315"/>
    <property type="project" value="SGD"/>
</dbReference>
<dbReference type="GO" id="GO:0000724">
    <property type="term" value="P:double-strand break repair via homologous recombination"/>
    <property type="evidence" value="ECO:0000318"/>
    <property type="project" value="GO_Central"/>
</dbReference>
<dbReference type="GO" id="GO:0045002">
    <property type="term" value="P:double-strand break repair via single-strand annealing"/>
    <property type="evidence" value="ECO:0000316"/>
    <property type="project" value="SGD"/>
</dbReference>
<dbReference type="GO" id="GO:0043504">
    <property type="term" value="P:mitochondrial DNA repair"/>
    <property type="evidence" value="ECO:0000315"/>
    <property type="project" value="SGD"/>
</dbReference>
<dbReference type="GO" id="GO:0006312">
    <property type="term" value="P:mitotic recombination"/>
    <property type="evidence" value="ECO:0000318"/>
    <property type="project" value="GO_Central"/>
</dbReference>
<dbReference type="GO" id="GO:2000278">
    <property type="term" value="P:regulation of DNA biosynthetic process"/>
    <property type="evidence" value="ECO:0000316"/>
    <property type="project" value="SGD"/>
</dbReference>
<dbReference type="GO" id="GO:0000722">
    <property type="term" value="P:telomere maintenance via recombination"/>
    <property type="evidence" value="ECO:0000315"/>
    <property type="project" value="SGD"/>
</dbReference>
<dbReference type="FunFam" id="3.30.390.80:FF:000003">
    <property type="entry name" value="DNA repair protein RAD59"/>
    <property type="match status" value="1"/>
</dbReference>
<dbReference type="Gene3D" id="3.30.390.80">
    <property type="entry name" value="DNA repair protein Rad52/59/22"/>
    <property type="match status" value="1"/>
</dbReference>
<dbReference type="InterPro" id="IPR041247">
    <property type="entry name" value="Rad52_fam"/>
</dbReference>
<dbReference type="InterPro" id="IPR007232">
    <property type="entry name" value="Rad52_Rad59_Rad22"/>
</dbReference>
<dbReference type="InterPro" id="IPR042525">
    <property type="entry name" value="Rad52_Rad59_Rad22_sf"/>
</dbReference>
<dbReference type="InterPro" id="IPR016810">
    <property type="entry name" value="Rad59"/>
</dbReference>
<dbReference type="PANTHER" id="PTHR12132">
    <property type="entry name" value="DNA REPAIR AND RECOMBINATION PROTEIN RAD52, RAD59"/>
    <property type="match status" value="1"/>
</dbReference>
<dbReference type="PANTHER" id="PTHR12132:SF2">
    <property type="entry name" value="DNA REPAIR PROTEIN RAD59"/>
    <property type="match status" value="1"/>
</dbReference>
<dbReference type="Pfam" id="PF04098">
    <property type="entry name" value="Rad52_Rad22"/>
    <property type="match status" value="1"/>
</dbReference>
<dbReference type="PIRSF" id="PIRSF022936">
    <property type="entry name" value="RAD59_fungi"/>
    <property type="match status" value="1"/>
</dbReference>
<dbReference type="SUPFAM" id="SSF54768">
    <property type="entry name" value="dsRNA-binding domain-like"/>
    <property type="match status" value="1"/>
</dbReference>
<proteinExistence type="evidence at protein level"/>
<evidence type="ECO:0000269" key="1">
    <source>
    </source>
</evidence>
<evidence type="ECO:0000269" key="2">
    <source>
    </source>
</evidence>
<evidence type="ECO:0000305" key="3"/>
<comment type="function">
    <text>Involved in the repair of double-strand breaks in DNA during vegetative growth via recombination and single-strand annealing. Anneals complementary single-stranded DNA.</text>
</comment>
<comment type="subunit">
    <text evidence="1">Interacts with RAD51 and RAD52.</text>
</comment>
<comment type="interaction">
    <interactant intactId="EBI-30885">
        <id>Q12223</id>
    </interactant>
    <interactant intactId="EBI-14719">
        <id>P06778</id>
        <label>RAD52</label>
    </interactant>
    <organismsDiffer>false</organismsDiffer>
    <experiments>2</experiments>
</comment>
<comment type="subcellular location">
    <subcellularLocation>
        <location>Nucleus</location>
    </subcellularLocation>
</comment>
<comment type="miscellaneous">
    <text evidence="2">Present with 468 molecules/cell in log phase SD medium.</text>
</comment>
<comment type="similarity">
    <text evidence="3">Belongs to the RAD52 family.</text>
</comment>
<organism>
    <name type="scientific">Saccharomyces cerevisiae (strain ATCC 204508 / S288c)</name>
    <name type="common">Baker's yeast</name>
    <dbReference type="NCBI Taxonomy" id="559292"/>
    <lineage>
        <taxon>Eukaryota</taxon>
        <taxon>Fungi</taxon>
        <taxon>Dikarya</taxon>
        <taxon>Ascomycota</taxon>
        <taxon>Saccharomycotina</taxon>
        <taxon>Saccharomycetes</taxon>
        <taxon>Saccharomycetales</taxon>
        <taxon>Saccharomycetaceae</taxon>
        <taxon>Saccharomyces</taxon>
    </lineage>
</organism>
<feature type="chain" id="PRO_0000173897" description="DNA repair protein RAD59">
    <location>
        <begin position="1"/>
        <end position="238"/>
    </location>
</feature>